<dbReference type="EC" id="2.1.1.-" evidence="1"/>
<dbReference type="EMBL" id="BA000031">
    <property type="protein sequence ID" value="BAC61146.1"/>
    <property type="molecule type" value="Genomic_DNA"/>
</dbReference>
<dbReference type="RefSeq" id="NP_799262.1">
    <property type="nucleotide sequence ID" value="NC_004603.1"/>
</dbReference>
<dbReference type="RefSeq" id="WP_005459549.1">
    <property type="nucleotide sequence ID" value="NC_004603.1"/>
</dbReference>
<dbReference type="SMR" id="Q87KU2"/>
<dbReference type="GeneID" id="1190446"/>
<dbReference type="KEGG" id="vpa:VP2883"/>
<dbReference type="PATRIC" id="fig|223926.6.peg.2773"/>
<dbReference type="eggNOG" id="COG2264">
    <property type="taxonomic scope" value="Bacteria"/>
</dbReference>
<dbReference type="HOGENOM" id="CLU_049382_4_1_6"/>
<dbReference type="Proteomes" id="UP000002493">
    <property type="component" value="Chromosome 1"/>
</dbReference>
<dbReference type="GO" id="GO:0005829">
    <property type="term" value="C:cytosol"/>
    <property type="evidence" value="ECO:0007669"/>
    <property type="project" value="TreeGrafter"/>
</dbReference>
<dbReference type="GO" id="GO:0016279">
    <property type="term" value="F:protein-lysine N-methyltransferase activity"/>
    <property type="evidence" value="ECO:0007669"/>
    <property type="project" value="TreeGrafter"/>
</dbReference>
<dbReference type="GO" id="GO:0032259">
    <property type="term" value="P:methylation"/>
    <property type="evidence" value="ECO:0007669"/>
    <property type="project" value="UniProtKB-KW"/>
</dbReference>
<dbReference type="CDD" id="cd02440">
    <property type="entry name" value="AdoMet_MTases"/>
    <property type="match status" value="1"/>
</dbReference>
<dbReference type="Gene3D" id="3.40.50.150">
    <property type="entry name" value="Vaccinia Virus protein VP39"/>
    <property type="match status" value="1"/>
</dbReference>
<dbReference type="HAMAP" id="MF_00735">
    <property type="entry name" value="Methyltr_PrmA"/>
    <property type="match status" value="1"/>
</dbReference>
<dbReference type="InterPro" id="IPR050078">
    <property type="entry name" value="Ribosomal_L11_MeTrfase_PrmA"/>
</dbReference>
<dbReference type="InterPro" id="IPR004498">
    <property type="entry name" value="Ribosomal_PrmA_MeTrfase"/>
</dbReference>
<dbReference type="InterPro" id="IPR029063">
    <property type="entry name" value="SAM-dependent_MTases_sf"/>
</dbReference>
<dbReference type="NCBIfam" id="TIGR00406">
    <property type="entry name" value="prmA"/>
    <property type="match status" value="1"/>
</dbReference>
<dbReference type="PANTHER" id="PTHR43648">
    <property type="entry name" value="ELECTRON TRANSFER FLAVOPROTEIN BETA SUBUNIT LYSINE METHYLTRANSFERASE"/>
    <property type="match status" value="1"/>
</dbReference>
<dbReference type="PANTHER" id="PTHR43648:SF1">
    <property type="entry name" value="ELECTRON TRANSFER FLAVOPROTEIN BETA SUBUNIT LYSINE METHYLTRANSFERASE"/>
    <property type="match status" value="1"/>
</dbReference>
<dbReference type="Pfam" id="PF06325">
    <property type="entry name" value="PrmA"/>
    <property type="match status" value="1"/>
</dbReference>
<dbReference type="PIRSF" id="PIRSF000401">
    <property type="entry name" value="RPL11_MTase"/>
    <property type="match status" value="1"/>
</dbReference>
<dbReference type="SUPFAM" id="SSF53335">
    <property type="entry name" value="S-adenosyl-L-methionine-dependent methyltransferases"/>
    <property type="match status" value="1"/>
</dbReference>
<sequence length="295" mass="32526">MPWIQIKLNATNENAEQIGDMLMEETGALSVTFLDAQDTPVFEPLPGETRLWGDTDILALYDAEADTNFIIDQIKASNMLAENFAYKVEQLEDKDWEREWMENFHPMKFGERLWICPSWREVPEPDAVNVMLDPGLAFGTGTHPTTALCLEWLESMDLSGKTVIDFGCGSGILAIAAIKLGAEKVIGIDIDPQALLASKDNAERNGVADKLEVYLPQNQPEGLIADVVVANILAGPLRELAPIIKGLVKPNGALAMSGVLDTQAEDVASYYRDELHIDPIVEQSEWCRISGRKQG</sequence>
<feature type="chain" id="PRO_0000192331" description="Ribosomal protein L11 methyltransferase">
    <location>
        <begin position="1"/>
        <end position="295"/>
    </location>
</feature>
<feature type="binding site" evidence="1">
    <location>
        <position position="146"/>
    </location>
    <ligand>
        <name>S-adenosyl-L-methionine</name>
        <dbReference type="ChEBI" id="CHEBI:59789"/>
    </ligand>
</feature>
<feature type="binding site" evidence="1">
    <location>
        <position position="167"/>
    </location>
    <ligand>
        <name>S-adenosyl-L-methionine</name>
        <dbReference type="ChEBI" id="CHEBI:59789"/>
    </ligand>
</feature>
<feature type="binding site" evidence="1">
    <location>
        <position position="189"/>
    </location>
    <ligand>
        <name>S-adenosyl-L-methionine</name>
        <dbReference type="ChEBI" id="CHEBI:59789"/>
    </ligand>
</feature>
<feature type="binding site" evidence="1">
    <location>
        <position position="231"/>
    </location>
    <ligand>
        <name>S-adenosyl-L-methionine</name>
        <dbReference type="ChEBI" id="CHEBI:59789"/>
    </ligand>
</feature>
<accession>Q87KU2</accession>
<reference key="1">
    <citation type="journal article" date="2003" name="Lancet">
        <title>Genome sequence of Vibrio parahaemolyticus: a pathogenic mechanism distinct from that of V. cholerae.</title>
        <authorList>
            <person name="Makino K."/>
            <person name="Oshima K."/>
            <person name="Kurokawa K."/>
            <person name="Yokoyama K."/>
            <person name="Uda T."/>
            <person name="Tagomori K."/>
            <person name="Iijima Y."/>
            <person name="Najima M."/>
            <person name="Nakano M."/>
            <person name="Yamashita A."/>
            <person name="Kubota Y."/>
            <person name="Kimura S."/>
            <person name="Yasunaga T."/>
            <person name="Honda T."/>
            <person name="Shinagawa H."/>
            <person name="Hattori M."/>
            <person name="Iida T."/>
        </authorList>
    </citation>
    <scope>NUCLEOTIDE SEQUENCE [LARGE SCALE GENOMIC DNA]</scope>
    <source>
        <strain>RIMD 2210633</strain>
    </source>
</reference>
<keyword id="KW-0963">Cytoplasm</keyword>
<keyword id="KW-0489">Methyltransferase</keyword>
<keyword id="KW-0949">S-adenosyl-L-methionine</keyword>
<keyword id="KW-0808">Transferase</keyword>
<organism>
    <name type="scientific">Vibrio parahaemolyticus serotype O3:K6 (strain RIMD 2210633)</name>
    <dbReference type="NCBI Taxonomy" id="223926"/>
    <lineage>
        <taxon>Bacteria</taxon>
        <taxon>Pseudomonadati</taxon>
        <taxon>Pseudomonadota</taxon>
        <taxon>Gammaproteobacteria</taxon>
        <taxon>Vibrionales</taxon>
        <taxon>Vibrionaceae</taxon>
        <taxon>Vibrio</taxon>
    </lineage>
</organism>
<comment type="function">
    <text evidence="1">Methylates ribosomal protein L11.</text>
</comment>
<comment type="catalytic activity">
    <reaction evidence="1">
        <text>L-lysyl-[protein] + 3 S-adenosyl-L-methionine = N(6),N(6),N(6)-trimethyl-L-lysyl-[protein] + 3 S-adenosyl-L-homocysteine + 3 H(+)</text>
        <dbReference type="Rhea" id="RHEA:54192"/>
        <dbReference type="Rhea" id="RHEA-COMP:9752"/>
        <dbReference type="Rhea" id="RHEA-COMP:13826"/>
        <dbReference type="ChEBI" id="CHEBI:15378"/>
        <dbReference type="ChEBI" id="CHEBI:29969"/>
        <dbReference type="ChEBI" id="CHEBI:57856"/>
        <dbReference type="ChEBI" id="CHEBI:59789"/>
        <dbReference type="ChEBI" id="CHEBI:61961"/>
    </reaction>
</comment>
<comment type="subcellular location">
    <subcellularLocation>
        <location evidence="1">Cytoplasm</location>
    </subcellularLocation>
</comment>
<comment type="similarity">
    <text evidence="1">Belongs to the methyltransferase superfamily. PrmA family.</text>
</comment>
<protein>
    <recommendedName>
        <fullName evidence="1">Ribosomal protein L11 methyltransferase</fullName>
        <shortName evidence="1">L11 Mtase</shortName>
        <ecNumber evidence="1">2.1.1.-</ecNumber>
    </recommendedName>
</protein>
<gene>
    <name evidence="1" type="primary">prmA</name>
    <name type="ordered locus">VP2883</name>
</gene>
<name>PRMA_VIBPA</name>
<evidence type="ECO:0000255" key="1">
    <source>
        <dbReference type="HAMAP-Rule" id="MF_00735"/>
    </source>
</evidence>
<proteinExistence type="inferred from homology"/>